<reference key="1">
    <citation type="journal article" date="1997" name="J. Neurochem.">
        <title>Four 5-hydroxytryptamine7 (5-HT7) receptor isoforms in human and rat produced by alternative splicing: species differences due to altered intron-exon organization.</title>
        <authorList>
            <person name="Heidmann D.E.A."/>
            <person name="Metcalf M.A."/>
            <person name="Kohen R."/>
            <person name="Hamblin M.W."/>
        </authorList>
    </citation>
    <scope>NUCLEOTIDE SEQUENCE [GENOMIC DNA / MRNA]</scope>
    <scope>ALTERNATIVE SPLICING</scope>
    <scope>TISSUE SPECIFICITY</scope>
</reference>
<reference key="2">
    <citation type="journal article" date="1993" name="J. Biol. Chem.">
        <title>Cloning of a novel human serotonin receptor (5-HT7) positively linked to adenylate cyclase.</title>
        <authorList>
            <person name="Bard J.A."/>
            <person name="Zgombick J.M."/>
            <person name="Adham N."/>
            <person name="Vaysse P."/>
            <person name="Branchek T.A."/>
            <person name="Weinshank R.L."/>
        </authorList>
    </citation>
    <scope>NUCLEOTIDE SEQUENCE [MRNA] (ISOFORM A)</scope>
    <scope>FUNCTION</scope>
    <source>
        <tissue>Fetal brain</tissue>
        <tissue>Placenta</tissue>
    </source>
</reference>
<reference key="3">
    <citation type="submission" date="2003-12" db="EMBL/GenBank/DDBJ databases">
        <title>Isolation of cDNA coding for 5-hydroxytryptamine receptor 7, transcript variant b (HTR7B).</title>
        <authorList>
            <person name="King M.M."/>
            <person name="Aronstam R.S."/>
            <person name="Sharma S.V."/>
        </authorList>
    </citation>
    <scope>NUCLEOTIDE SEQUENCE [LARGE SCALE MRNA] (ISOFORM B)</scope>
    <source>
        <tissue>Brain</tissue>
    </source>
</reference>
<reference key="4">
    <citation type="journal article" date="2004" name="Nat. Genet.">
        <title>Complete sequencing and characterization of 21,243 full-length human cDNAs.</title>
        <authorList>
            <person name="Ota T."/>
            <person name="Suzuki Y."/>
            <person name="Nishikawa T."/>
            <person name="Otsuki T."/>
            <person name="Sugiyama T."/>
            <person name="Irie R."/>
            <person name="Wakamatsu A."/>
            <person name="Hayashi K."/>
            <person name="Sato H."/>
            <person name="Nagai K."/>
            <person name="Kimura K."/>
            <person name="Makita H."/>
            <person name="Sekine M."/>
            <person name="Obayashi M."/>
            <person name="Nishi T."/>
            <person name="Shibahara T."/>
            <person name="Tanaka T."/>
            <person name="Ishii S."/>
            <person name="Yamamoto J."/>
            <person name="Saito K."/>
            <person name="Kawai Y."/>
            <person name="Isono Y."/>
            <person name="Nakamura Y."/>
            <person name="Nagahari K."/>
            <person name="Murakami K."/>
            <person name="Yasuda T."/>
            <person name="Iwayanagi T."/>
            <person name="Wagatsuma M."/>
            <person name="Shiratori A."/>
            <person name="Sudo H."/>
            <person name="Hosoiri T."/>
            <person name="Kaku Y."/>
            <person name="Kodaira H."/>
            <person name="Kondo H."/>
            <person name="Sugawara M."/>
            <person name="Takahashi M."/>
            <person name="Kanda K."/>
            <person name="Yokoi T."/>
            <person name="Furuya T."/>
            <person name="Kikkawa E."/>
            <person name="Omura Y."/>
            <person name="Abe K."/>
            <person name="Kamihara K."/>
            <person name="Katsuta N."/>
            <person name="Sato K."/>
            <person name="Tanikawa M."/>
            <person name="Yamazaki M."/>
            <person name="Ninomiya K."/>
            <person name="Ishibashi T."/>
            <person name="Yamashita H."/>
            <person name="Murakawa K."/>
            <person name="Fujimori K."/>
            <person name="Tanai H."/>
            <person name="Kimata M."/>
            <person name="Watanabe M."/>
            <person name="Hiraoka S."/>
            <person name="Chiba Y."/>
            <person name="Ishida S."/>
            <person name="Ono Y."/>
            <person name="Takiguchi S."/>
            <person name="Watanabe S."/>
            <person name="Yosida M."/>
            <person name="Hotuta T."/>
            <person name="Kusano J."/>
            <person name="Kanehori K."/>
            <person name="Takahashi-Fujii A."/>
            <person name="Hara H."/>
            <person name="Tanase T.-O."/>
            <person name="Nomura Y."/>
            <person name="Togiya S."/>
            <person name="Komai F."/>
            <person name="Hara R."/>
            <person name="Takeuchi K."/>
            <person name="Arita M."/>
            <person name="Imose N."/>
            <person name="Musashino K."/>
            <person name="Yuuki H."/>
            <person name="Oshima A."/>
            <person name="Sasaki N."/>
            <person name="Aotsuka S."/>
            <person name="Yoshikawa Y."/>
            <person name="Matsunawa H."/>
            <person name="Ichihara T."/>
            <person name="Shiohata N."/>
            <person name="Sano S."/>
            <person name="Moriya S."/>
            <person name="Momiyama H."/>
            <person name="Satoh N."/>
            <person name="Takami S."/>
            <person name="Terashima Y."/>
            <person name="Suzuki O."/>
            <person name="Nakagawa S."/>
            <person name="Senoh A."/>
            <person name="Mizoguchi H."/>
            <person name="Goto Y."/>
            <person name="Shimizu F."/>
            <person name="Wakebe H."/>
            <person name="Hishigaki H."/>
            <person name="Watanabe T."/>
            <person name="Sugiyama A."/>
            <person name="Takemoto M."/>
            <person name="Kawakami B."/>
            <person name="Yamazaki M."/>
            <person name="Watanabe K."/>
            <person name="Kumagai A."/>
            <person name="Itakura S."/>
            <person name="Fukuzumi Y."/>
            <person name="Fujimori Y."/>
            <person name="Komiyama M."/>
            <person name="Tashiro H."/>
            <person name="Tanigami A."/>
            <person name="Fujiwara T."/>
            <person name="Ono T."/>
            <person name="Yamada K."/>
            <person name="Fujii Y."/>
            <person name="Ozaki K."/>
            <person name="Hirao M."/>
            <person name="Ohmori Y."/>
            <person name="Kawabata A."/>
            <person name="Hikiji T."/>
            <person name="Kobatake N."/>
            <person name="Inagaki H."/>
            <person name="Ikema Y."/>
            <person name="Okamoto S."/>
            <person name="Okitani R."/>
            <person name="Kawakami T."/>
            <person name="Noguchi S."/>
            <person name="Itoh T."/>
            <person name="Shigeta K."/>
            <person name="Senba T."/>
            <person name="Matsumura K."/>
            <person name="Nakajima Y."/>
            <person name="Mizuno T."/>
            <person name="Morinaga M."/>
            <person name="Sasaki M."/>
            <person name="Togashi T."/>
            <person name="Oyama M."/>
            <person name="Hata H."/>
            <person name="Watanabe M."/>
            <person name="Komatsu T."/>
            <person name="Mizushima-Sugano J."/>
            <person name="Satoh T."/>
            <person name="Shirai Y."/>
            <person name="Takahashi Y."/>
            <person name="Nakagawa K."/>
            <person name="Okumura K."/>
            <person name="Nagase T."/>
            <person name="Nomura N."/>
            <person name="Kikuchi H."/>
            <person name="Masuho Y."/>
            <person name="Yamashita R."/>
            <person name="Nakai K."/>
            <person name="Yada T."/>
            <person name="Nakamura Y."/>
            <person name="Ohara O."/>
            <person name="Isogai T."/>
            <person name="Sugano S."/>
        </authorList>
    </citation>
    <scope>NUCLEOTIDE SEQUENCE [LARGE SCALE MRNA]</scope>
    <source>
        <tissue>Testis</tissue>
    </source>
</reference>
<reference key="5">
    <citation type="journal article" date="2008" name="Nat. Methods">
        <title>Human protein factory for converting the transcriptome into an in vitro-expressed proteome.</title>
        <authorList>
            <person name="Goshima N."/>
            <person name="Kawamura Y."/>
            <person name="Fukumoto A."/>
            <person name="Miura A."/>
            <person name="Honma R."/>
            <person name="Satoh R."/>
            <person name="Wakamatsu A."/>
            <person name="Yamamoto J."/>
            <person name="Kimura K."/>
            <person name="Nishikawa T."/>
            <person name="Andoh T."/>
            <person name="Iida Y."/>
            <person name="Ishikawa K."/>
            <person name="Ito E."/>
            <person name="Kagawa N."/>
            <person name="Kaminaga C."/>
            <person name="Kanehori K."/>
            <person name="Kawakami B."/>
            <person name="Kenmochi K."/>
            <person name="Kimura R."/>
            <person name="Kobayashi M."/>
            <person name="Kuroita T."/>
            <person name="Kuwayama H."/>
            <person name="Maruyama Y."/>
            <person name="Matsuo K."/>
            <person name="Minami K."/>
            <person name="Mitsubori M."/>
            <person name="Mori M."/>
            <person name="Morishita R."/>
            <person name="Murase A."/>
            <person name="Nishikawa A."/>
            <person name="Nishikawa S."/>
            <person name="Okamoto T."/>
            <person name="Sakagami N."/>
            <person name="Sakamoto Y."/>
            <person name="Sasaki Y."/>
            <person name="Seki T."/>
            <person name="Sono S."/>
            <person name="Sugiyama A."/>
            <person name="Sumiya T."/>
            <person name="Takayama T."/>
            <person name="Takayama Y."/>
            <person name="Takeda H."/>
            <person name="Togashi T."/>
            <person name="Yahata K."/>
            <person name="Yamada H."/>
            <person name="Yanagisawa Y."/>
            <person name="Endo Y."/>
            <person name="Imamoto F."/>
            <person name="Kisu Y."/>
            <person name="Tanaka S."/>
            <person name="Isogai T."/>
            <person name="Imai J."/>
            <person name="Watanabe S."/>
            <person name="Nomura N."/>
        </authorList>
    </citation>
    <scope>NUCLEOTIDE SEQUENCE [LARGE SCALE MRNA] (ISOFORM B)</scope>
</reference>
<reference key="6">
    <citation type="journal article" date="2004" name="Nature">
        <title>The DNA sequence and comparative analysis of human chromosome 10.</title>
        <authorList>
            <person name="Deloukas P."/>
            <person name="Earthrowl M.E."/>
            <person name="Grafham D.V."/>
            <person name="Rubenfield M."/>
            <person name="French L."/>
            <person name="Steward C.A."/>
            <person name="Sims S.K."/>
            <person name="Jones M.C."/>
            <person name="Searle S."/>
            <person name="Scott C."/>
            <person name="Howe K."/>
            <person name="Hunt S.E."/>
            <person name="Andrews T.D."/>
            <person name="Gilbert J.G.R."/>
            <person name="Swarbreck D."/>
            <person name="Ashurst J.L."/>
            <person name="Taylor A."/>
            <person name="Battles J."/>
            <person name="Bird C.P."/>
            <person name="Ainscough R."/>
            <person name="Almeida J.P."/>
            <person name="Ashwell R.I.S."/>
            <person name="Ambrose K.D."/>
            <person name="Babbage A.K."/>
            <person name="Bagguley C.L."/>
            <person name="Bailey J."/>
            <person name="Banerjee R."/>
            <person name="Bates K."/>
            <person name="Beasley H."/>
            <person name="Bray-Allen S."/>
            <person name="Brown A.J."/>
            <person name="Brown J.Y."/>
            <person name="Burford D.C."/>
            <person name="Burrill W."/>
            <person name="Burton J."/>
            <person name="Cahill P."/>
            <person name="Camire D."/>
            <person name="Carter N.P."/>
            <person name="Chapman J.C."/>
            <person name="Clark S.Y."/>
            <person name="Clarke G."/>
            <person name="Clee C.M."/>
            <person name="Clegg S."/>
            <person name="Corby N."/>
            <person name="Coulson A."/>
            <person name="Dhami P."/>
            <person name="Dutta I."/>
            <person name="Dunn M."/>
            <person name="Faulkner L."/>
            <person name="Frankish A."/>
            <person name="Frankland J.A."/>
            <person name="Garner P."/>
            <person name="Garnett J."/>
            <person name="Gribble S."/>
            <person name="Griffiths C."/>
            <person name="Grocock R."/>
            <person name="Gustafson E."/>
            <person name="Hammond S."/>
            <person name="Harley J.L."/>
            <person name="Hart E."/>
            <person name="Heath P.D."/>
            <person name="Ho T.P."/>
            <person name="Hopkins B."/>
            <person name="Horne J."/>
            <person name="Howden P.J."/>
            <person name="Huckle E."/>
            <person name="Hynds C."/>
            <person name="Johnson C."/>
            <person name="Johnson D."/>
            <person name="Kana A."/>
            <person name="Kay M."/>
            <person name="Kimberley A.M."/>
            <person name="Kershaw J.K."/>
            <person name="Kokkinaki M."/>
            <person name="Laird G.K."/>
            <person name="Lawlor S."/>
            <person name="Lee H.M."/>
            <person name="Leongamornlert D.A."/>
            <person name="Laird G."/>
            <person name="Lloyd C."/>
            <person name="Lloyd D.M."/>
            <person name="Loveland J."/>
            <person name="Lovell J."/>
            <person name="McLaren S."/>
            <person name="McLay K.E."/>
            <person name="McMurray A."/>
            <person name="Mashreghi-Mohammadi M."/>
            <person name="Matthews L."/>
            <person name="Milne S."/>
            <person name="Nickerson T."/>
            <person name="Nguyen M."/>
            <person name="Overton-Larty E."/>
            <person name="Palmer S.A."/>
            <person name="Pearce A.V."/>
            <person name="Peck A.I."/>
            <person name="Pelan S."/>
            <person name="Phillimore B."/>
            <person name="Porter K."/>
            <person name="Rice C.M."/>
            <person name="Rogosin A."/>
            <person name="Ross M.T."/>
            <person name="Sarafidou T."/>
            <person name="Sehra H.K."/>
            <person name="Shownkeen R."/>
            <person name="Skuce C.D."/>
            <person name="Smith M."/>
            <person name="Standring L."/>
            <person name="Sycamore N."/>
            <person name="Tester J."/>
            <person name="Thorpe A."/>
            <person name="Torcasso W."/>
            <person name="Tracey A."/>
            <person name="Tromans A."/>
            <person name="Tsolas J."/>
            <person name="Wall M."/>
            <person name="Walsh J."/>
            <person name="Wang H."/>
            <person name="Weinstock K."/>
            <person name="West A.P."/>
            <person name="Willey D.L."/>
            <person name="Whitehead S.L."/>
            <person name="Wilming L."/>
            <person name="Wray P.W."/>
            <person name="Young L."/>
            <person name="Chen Y."/>
            <person name="Lovering R.C."/>
            <person name="Moschonas N.K."/>
            <person name="Siebert R."/>
            <person name="Fechtel K."/>
            <person name="Bentley D."/>
            <person name="Durbin R.M."/>
            <person name="Hubbard T."/>
            <person name="Doucette-Stamm L."/>
            <person name="Beck S."/>
            <person name="Smith D.R."/>
            <person name="Rogers J."/>
        </authorList>
    </citation>
    <scope>NUCLEOTIDE SEQUENCE [LARGE SCALE GENOMIC DNA]</scope>
</reference>
<reference key="7">
    <citation type="submission" date="2005-09" db="EMBL/GenBank/DDBJ databases">
        <authorList>
            <person name="Mural R.J."/>
            <person name="Istrail S."/>
            <person name="Sutton G.G."/>
            <person name="Florea L."/>
            <person name="Halpern A.L."/>
            <person name="Mobarry C.M."/>
            <person name="Lippert R."/>
            <person name="Walenz B."/>
            <person name="Shatkay H."/>
            <person name="Dew I."/>
            <person name="Miller J.R."/>
            <person name="Flanigan M.J."/>
            <person name="Edwards N.J."/>
            <person name="Bolanos R."/>
            <person name="Fasulo D."/>
            <person name="Halldorsson B.V."/>
            <person name="Hannenhalli S."/>
            <person name="Turner R."/>
            <person name="Yooseph S."/>
            <person name="Lu F."/>
            <person name="Nusskern D.R."/>
            <person name="Shue B.C."/>
            <person name="Zheng X.H."/>
            <person name="Zhong F."/>
            <person name="Delcher A.L."/>
            <person name="Huson D.H."/>
            <person name="Kravitz S.A."/>
            <person name="Mouchard L."/>
            <person name="Reinert K."/>
            <person name="Remington K.A."/>
            <person name="Clark A.G."/>
            <person name="Waterman M.S."/>
            <person name="Eichler E.E."/>
            <person name="Adams M.D."/>
            <person name="Hunkapiller M.W."/>
            <person name="Myers E.W."/>
            <person name="Venter J.C."/>
        </authorList>
    </citation>
    <scope>NUCLEOTIDE SEQUENCE [LARGE SCALE GENOMIC DNA]</scope>
</reference>
<reference key="8">
    <citation type="journal article" date="2004" name="Genome Res.">
        <title>The status, quality, and expansion of the NIH full-length cDNA project: the Mammalian Gene Collection (MGC).</title>
        <authorList>
            <consortium name="The MGC Project Team"/>
        </authorList>
    </citation>
    <scope>NUCLEOTIDE SEQUENCE [LARGE SCALE MRNA] (ISOFORM A)</scope>
    <source>
        <tissue>Testis</tissue>
    </source>
</reference>
<reference key="9">
    <citation type="journal article" date="2012" name="FEBS J.">
        <title>Biochemical and pharmacological study of N-linked glycosylation of the human serotonin 5-HT(7)a receptor.</title>
        <authorList>
            <person name="Gellynck E."/>
            <person name="Andressen K.W."/>
            <person name="Lintermans B."/>
            <person name="Haegeman G."/>
            <person name="Levy F.O."/>
            <person name="Vanhoenacker P."/>
            <person name="Van Craenenbroeck K."/>
        </authorList>
    </citation>
    <scope>SUBCELLULAR LOCATION</scope>
    <scope>GLYCOSYLATION AT ASN-5 AND ASN-66</scope>
</reference>
<reference evidence="16" key="10">
    <citation type="journal article" date="2022" name="Mol. Cell">
        <title>GPCRs steer Gi and Gs selectivity via TM5-TM6 switches as revealed by structures of serotonin receptors.</title>
        <authorList>
            <person name="Huang S."/>
            <person name="Xu P."/>
            <person name="Shen D.D."/>
            <person name="Simon I.A."/>
            <person name="Mao C."/>
            <person name="Tan Y."/>
            <person name="Zhang H."/>
            <person name="Harpsoee K."/>
            <person name="Li H."/>
            <person name="Zhang Y."/>
            <person name="You C."/>
            <person name="Yu X."/>
            <person name="Jiang Y."/>
            <person name="Zhang Y."/>
            <person name="Gloriam D.E."/>
            <person name="Xu H.E."/>
        </authorList>
    </citation>
    <scope>STRUCTURE BY ELECTRON MICROSCOPY (3.2 ANGSTROMS) OF 2-432 IN COMPLEX WITH GNB1; GNB2 AND GNAS2</scope>
    <scope>FUNCTION</scope>
    <scope>MUTAGENESIS OF ASP-162; CYS-166; THR-167; ILE-233; THR-240; SER-243; TRP-340; PHE-343; PHE-344 AND TYR-374</scope>
</reference>
<reference key="11">
    <citation type="journal article" date="1996" name="Mol. Psychiatry">
        <title>The human serotonin 7 (5-HT7) receptor gene: genomic organization and systematic mutation screening in schizophrenia and bipolar affective disorder.</title>
        <authorList>
            <person name="Erdmann J."/>
            <person name="Nothen M.M."/>
            <person name="Shimron-Abarbanell D."/>
            <person name="Rietschel M."/>
            <person name="Albus M."/>
            <person name="Borrmann M."/>
            <person name="Maier W."/>
            <person name="Franzek E."/>
            <person name="Korner J."/>
            <person name="Weigelt B."/>
            <person name="Fimmers R."/>
            <person name="Propping P."/>
        </authorList>
    </citation>
    <scope>VARIANTS LYS-92 AND LEU-279</scope>
</reference>
<evidence type="ECO:0000250" key="1">
    <source>
        <dbReference type="UniProtKB" id="Q13639"/>
    </source>
</evidence>
<evidence type="ECO:0000255" key="2"/>
<evidence type="ECO:0000255" key="3">
    <source>
        <dbReference type="PROSITE-ProRule" id="PRU00521"/>
    </source>
</evidence>
<evidence type="ECO:0000269" key="4">
    <source>
    </source>
</evidence>
<evidence type="ECO:0000269" key="5">
    <source>
    </source>
</evidence>
<evidence type="ECO:0000269" key="6">
    <source>
    </source>
</evidence>
<evidence type="ECO:0000269" key="7">
    <source>
    </source>
</evidence>
<evidence type="ECO:0000269" key="8">
    <source>
    </source>
</evidence>
<evidence type="ECO:0000303" key="9">
    <source>
    </source>
</evidence>
<evidence type="ECO:0000303" key="10">
    <source>
    </source>
</evidence>
<evidence type="ECO:0000303" key="11">
    <source>
    </source>
</evidence>
<evidence type="ECO:0000303" key="12">
    <source>
    </source>
</evidence>
<evidence type="ECO:0000303" key="13">
    <source ref="3"/>
</evidence>
<evidence type="ECO:0000305" key="14"/>
<evidence type="ECO:0000312" key="15">
    <source>
        <dbReference type="HGNC" id="HGNC:5302"/>
    </source>
</evidence>
<evidence type="ECO:0007744" key="16">
    <source>
        <dbReference type="PDB" id="7XTC"/>
    </source>
</evidence>
<evidence type="ECO:0007829" key="17">
    <source>
        <dbReference type="PDB" id="7XTC"/>
    </source>
</evidence>
<sequence length="479" mass="53555">MMDVNSSGRPDLYGHLRSFLLPEVGRGLPDLSPDGGADPVAGSWAPHLLSEVTASPAPTWDAPPDNASGCGEQINYGRVEKVVIGSILTLITLLTIAGNCLVVISVCFVKKLRQPSNYLIVSLALADLSVAVAVMPFVSVTDLIGGKWIFGHFFCNVFIAMDVMCCTASIMTLCVISIDRYLGITRPLTYPVRQNGKCMAKMILSVWLLSASITLPPLFGWAQNVNDDKVCLISQDFGYTIYSTAVAFYIPMSVMLFMYYQIYKAARKSAAKHKFPGFPRVEPDSVIALNGIVKLQKEVEECANLSRLLKHERKNISIFKREQKAATTLGIIVGAFTVCWLPFFLLSTARPFICGTSCSCIPLWVERTFLWLGYANSLINPFIYAFFNRDLRTTYRSLLQCQYRNINRKLSAAGMHEALKLAERPERPEFVLRACTRRVLLRPEKRPPVSVWVLQSPDHHNWLADKMLTTVEKKVMIHD</sequence>
<name>5HT7R_HUMAN</name>
<organism>
    <name type="scientific">Homo sapiens</name>
    <name type="common">Human</name>
    <dbReference type="NCBI Taxonomy" id="9606"/>
    <lineage>
        <taxon>Eukaryota</taxon>
        <taxon>Metazoa</taxon>
        <taxon>Chordata</taxon>
        <taxon>Craniata</taxon>
        <taxon>Vertebrata</taxon>
        <taxon>Euteleostomi</taxon>
        <taxon>Mammalia</taxon>
        <taxon>Eutheria</taxon>
        <taxon>Euarchontoglires</taxon>
        <taxon>Primates</taxon>
        <taxon>Haplorrhini</taxon>
        <taxon>Catarrhini</taxon>
        <taxon>Hominidae</taxon>
        <taxon>Homo</taxon>
    </lineage>
</organism>
<proteinExistence type="evidence at protein level"/>
<protein>
    <recommendedName>
        <fullName evidence="14">5-hydroxytryptamine receptor 7</fullName>
        <shortName evidence="12">5-HT-7</shortName>
        <shortName evidence="12">5-HT7</shortName>
    </recommendedName>
    <alternativeName>
        <fullName>5-HT-X</fullName>
    </alternativeName>
    <alternativeName>
        <fullName evidence="12">Serotonin receptor 7</fullName>
    </alternativeName>
</protein>
<feature type="chain" id="PRO_0000068979" description="5-hydroxytryptamine receptor 7">
    <location>
        <begin position="1"/>
        <end position="479"/>
    </location>
</feature>
<feature type="topological domain" description="Extracellular" evidence="5 16">
    <location>
        <begin position="1"/>
        <end position="83"/>
    </location>
</feature>
<feature type="transmembrane region" description="Helical; Name=1" evidence="5 16">
    <location>
        <begin position="84"/>
        <end position="108"/>
    </location>
</feature>
<feature type="topological domain" description="Cytoplasmic" evidence="5 16">
    <location>
        <begin position="109"/>
        <end position="118"/>
    </location>
</feature>
<feature type="transmembrane region" description="Helical; Name=2" evidence="5 16">
    <location>
        <begin position="119"/>
        <end position="140"/>
    </location>
</feature>
<feature type="topological domain" description="Extracellular" evidence="5 16">
    <location>
        <begin position="141"/>
        <end position="152"/>
    </location>
</feature>
<feature type="transmembrane region" description="Helical; Name=3" evidence="5 16">
    <location>
        <begin position="153"/>
        <end position="178"/>
    </location>
</feature>
<feature type="topological domain" description="Cytoplasmic" evidence="5 16">
    <location>
        <begin position="179"/>
        <end position="198"/>
    </location>
</feature>
<feature type="transmembrane region" description="Helical; Name=4" evidence="5 16">
    <location>
        <begin position="199"/>
        <end position="219"/>
    </location>
</feature>
<feature type="topological domain" description="Extracellular" evidence="5 16">
    <location>
        <begin position="220"/>
        <end position="237"/>
    </location>
</feature>
<feature type="transmembrane region" description="Helical; Name=5" evidence="5 16">
    <location>
        <begin position="238"/>
        <end position="260"/>
    </location>
</feature>
<feature type="topological domain" description="Cytoplasmic" evidence="5 16">
    <location>
        <begin position="261"/>
        <end position="326"/>
    </location>
</feature>
<feature type="transmembrane region" description="Helical; Name=6" evidence="5 16">
    <location>
        <begin position="327"/>
        <end position="352"/>
    </location>
</feature>
<feature type="topological domain" description="Extracellular" evidence="5 16">
    <location>
        <begin position="353"/>
        <end position="363"/>
    </location>
</feature>
<feature type="transmembrane region" description="Helical; Name=7" evidence="5 16">
    <location>
        <begin position="364"/>
        <end position="387"/>
    </location>
</feature>
<feature type="topological domain" description="Cytoplasmic" evidence="5 16">
    <location>
        <begin position="388"/>
        <end position="479"/>
    </location>
</feature>
<feature type="binding site" evidence="1">
    <location>
        <position position="162"/>
    </location>
    <ligand>
        <name>serotonin</name>
        <dbReference type="ChEBI" id="CHEBI:350546"/>
    </ligand>
</feature>
<feature type="lipid moiety-binding region" description="S-palmitoyl cysteine" evidence="2">
    <location>
        <position position="401"/>
    </location>
</feature>
<feature type="glycosylation site" description="N-linked (GlcNAc...) asparagine" evidence="4">
    <location>
        <position position="5"/>
    </location>
</feature>
<feature type="glycosylation site" description="N-linked (GlcNAc...) asparagine" evidence="4">
    <location>
        <position position="66"/>
    </location>
</feature>
<feature type="disulfide bond" evidence="3 5 16">
    <location>
        <begin position="155"/>
        <end position="231"/>
    </location>
</feature>
<feature type="splice variant" id="VSP_001857" description="In isoform A." evidence="9 11">
    <original>RACTRRVLLRPEKRPPVSVWVLQSPDHHNWLADKMLTTVEKKVMIHD</original>
    <variation>QNADYCRKKGHDS</variation>
    <location>
        <begin position="433"/>
        <end position="479"/>
    </location>
</feature>
<feature type="splice variant" id="VSP_001856" description="In isoform B." evidence="10 13">
    <location>
        <begin position="433"/>
        <end position="479"/>
    </location>
</feature>
<feature type="sequence variant" id="VAR_012995" description="In dbSNP:rs1379762209." evidence="8">
    <original>T</original>
    <variation>K</variation>
    <location>
        <position position="92"/>
    </location>
</feature>
<feature type="sequence variant" id="VAR_012996" description="In dbSNP:rs114969659." evidence="8">
    <original>P</original>
    <variation>L</variation>
    <location>
        <position position="279"/>
    </location>
</feature>
<feature type="sequence variant" id="VAR_049365" description="In dbSNP:rs33954285.">
    <original>P</original>
    <variation>Q</variation>
    <location>
        <position position="448"/>
    </location>
</feature>
<feature type="mutagenesis site" description="Abolished G-protein coupled receptor activity in response to serotonin." evidence="5">
    <original>D</original>
    <variation>A</variation>
    <location>
        <position position="162"/>
    </location>
</feature>
<feature type="mutagenesis site" description="Decreased G-protein coupled receptor activity in response to serotonin." evidence="5">
    <original>C</original>
    <variation>A</variation>
    <location>
        <position position="166"/>
    </location>
</feature>
<feature type="mutagenesis site" description="Decreased G-protein coupled receptor activity in response to serotonin." evidence="5">
    <original>T</original>
    <variation>A</variation>
    <location>
        <position position="167"/>
    </location>
</feature>
<feature type="mutagenesis site" description="Decreased G-protein coupled receptor activity in response to serotonin." evidence="5">
    <original>I</original>
    <variation>A</variation>
    <location>
        <position position="233"/>
    </location>
</feature>
<feature type="mutagenesis site" description="Decreased G-protein coupled receptor activity in response to serotonin." evidence="5">
    <original>T</original>
    <variation>A</variation>
    <location>
        <position position="240"/>
    </location>
</feature>
<feature type="mutagenesis site" description="Decreased G-protein coupled receptor activity in response to serotonin." evidence="5">
    <original>S</original>
    <variation>A</variation>
    <location>
        <position position="243"/>
    </location>
</feature>
<feature type="mutagenesis site" description="Decreased G-protein coupled receptor activity in response to serotonin." evidence="5">
    <original>W</original>
    <variation>A</variation>
    <location>
        <position position="340"/>
    </location>
</feature>
<feature type="mutagenesis site" description="Decreased G-protein coupled receptor activity in response to serotonin." evidence="5">
    <original>F</original>
    <variation>A</variation>
    <location>
        <position position="343"/>
    </location>
</feature>
<feature type="mutagenesis site" description="Decreased G-protein coupled receptor activity in response to serotonin." evidence="5">
    <original>F</original>
    <variation>A</variation>
    <location>
        <position position="344"/>
    </location>
</feature>
<feature type="mutagenesis site" description="Decreased G-protein coupled receptor activity in response to serotonin." evidence="5">
    <original>Y</original>
    <variation>A</variation>
    <location>
        <position position="374"/>
    </location>
</feature>
<feature type="helix" evidence="17">
    <location>
        <begin position="84"/>
        <end position="108"/>
    </location>
</feature>
<feature type="helix" evidence="17">
    <location>
        <begin position="110"/>
        <end position="112"/>
    </location>
</feature>
<feature type="helix" evidence="17">
    <location>
        <begin position="115"/>
        <end position="133"/>
    </location>
</feature>
<feature type="helix" evidence="17">
    <location>
        <begin position="135"/>
        <end position="141"/>
    </location>
</feature>
<feature type="turn" evidence="17">
    <location>
        <begin position="142"/>
        <end position="145"/>
    </location>
</feature>
<feature type="helix" evidence="17">
    <location>
        <begin position="151"/>
        <end position="185"/>
    </location>
</feature>
<feature type="turn" evidence="17">
    <location>
        <begin position="187"/>
        <end position="189"/>
    </location>
</feature>
<feature type="helix" evidence="17">
    <location>
        <begin position="190"/>
        <end position="193"/>
    </location>
</feature>
<feature type="helix" evidence="17">
    <location>
        <begin position="196"/>
        <end position="212"/>
    </location>
</feature>
<feature type="helix" evidence="17">
    <location>
        <begin position="215"/>
        <end position="218"/>
    </location>
</feature>
<feature type="helix" evidence="17">
    <location>
        <begin position="237"/>
        <end position="247"/>
    </location>
</feature>
<feature type="helix" evidence="17">
    <location>
        <begin position="249"/>
        <end position="272"/>
    </location>
</feature>
<feature type="helix" evidence="17">
    <location>
        <begin position="325"/>
        <end position="349"/>
    </location>
</feature>
<feature type="helix" evidence="17">
    <location>
        <begin position="363"/>
        <end position="384"/>
    </location>
</feature>
<feature type="turn" evidence="17">
    <location>
        <begin position="385"/>
        <end position="387"/>
    </location>
</feature>
<feature type="helix" evidence="17">
    <location>
        <begin position="389"/>
        <end position="394"/>
    </location>
</feature>
<feature type="helix" evidence="17">
    <location>
        <begin position="395"/>
        <end position="397"/>
    </location>
</feature>
<feature type="helix" evidence="17">
    <location>
        <begin position="398"/>
        <end position="401"/>
    </location>
</feature>
<keyword id="KW-0002">3D-structure</keyword>
<keyword id="KW-0025">Alternative splicing</keyword>
<keyword id="KW-1003">Cell membrane</keyword>
<keyword id="KW-1015">Disulfide bond</keyword>
<keyword id="KW-0297">G-protein coupled receptor</keyword>
<keyword id="KW-0325">Glycoprotein</keyword>
<keyword id="KW-0449">Lipoprotein</keyword>
<keyword id="KW-0472">Membrane</keyword>
<keyword id="KW-0564">Palmitate</keyword>
<keyword id="KW-1267">Proteomics identification</keyword>
<keyword id="KW-0675">Receptor</keyword>
<keyword id="KW-1185">Reference proteome</keyword>
<keyword id="KW-0807">Transducer</keyword>
<keyword id="KW-0812">Transmembrane</keyword>
<keyword id="KW-1133">Transmembrane helix</keyword>
<gene>
    <name evidence="13 15" type="primary">HTR7</name>
</gene>
<dbReference type="EMBL" id="U68487">
    <property type="protein sequence ID" value="AAB48393.1"/>
    <property type="molecule type" value="mRNA"/>
</dbReference>
<dbReference type="EMBL" id="U68488">
    <property type="protein sequence ID" value="AAB48394.1"/>
    <property type="molecule type" value="mRNA"/>
</dbReference>
<dbReference type="EMBL" id="U68492">
    <property type="protein sequence ID" value="AAF07218.1"/>
    <property type="molecule type" value="Genomic_DNA"/>
</dbReference>
<dbReference type="EMBL" id="U68493">
    <property type="protein sequence ID" value="AAF07217.1"/>
    <property type="molecule type" value="Genomic_DNA"/>
</dbReference>
<dbReference type="EMBL" id="U68492">
    <property type="protein sequence ID" value="AAF07217.1"/>
    <property type="status" value="JOINED"/>
    <property type="molecule type" value="Genomic_DNA"/>
</dbReference>
<dbReference type="EMBL" id="U68493">
    <property type="protein sequence ID" value="AAB48397.2"/>
    <property type="molecule type" value="Genomic_DNA"/>
</dbReference>
<dbReference type="EMBL" id="U68492">
    <property type="protein sequence ID" value="AAB48397.2"/>
    <property type="status" value="JOINED"/>
    <property type="molecule type" value="Genomic_DNA"/>
</dbReference>
<dbReference type="EMBL" id="L21195">
    <property type="protein sequence ID" value="AAC37538.1"/>
    <property type="molecule type" value="mRNA"/>
</dbReference>
<dbReference type="EMBL" id="AY493988">
    <property type="protein sequence ID" value="AAR87480.1"/>
    <property type="molecule type" value="mRNA"/>
</dbReference>
<dbReference type="EMBL" id="AK292606">
    <property type="protein sequence ID" value="BAF85295.1"/>
    <property type="molecule type" value="mRNA"/>
</dbReference>
<dbReference type="EMBL" id="AB451482">
    <property type="protein sequence ID" value="BAG70296.1"/>
    <property type="molecule type" value="mRNA"/>
</dbReference>
<dbReference type="EMBL" id="AL360011">
    <property type="status" value="NOT_ANNOTATED_CDS"/>
    <property type="molecule type" value="Genomic_DNA"/>
</dbReference>
<dbReference type="EMBL" id="CH471066">
    <property type="protein sequence ID" value="EAW50118.1"/>
    <property type="molecule type" value="Genomic_DNA"/>
</dbReference>
<dbReference type="EMBL" id="CH471066">
    <property type="protein sequence ID" value="EAW50119.1"/>
    <property type="molecule type" value="Genomic_DNA"/>
</dbReference>
<dbReference type="EMBL" id="CH471066">
    <property type="protein sequence ID" value="EAW50120.1"/>
    <property type="molecule type" value="Genomic_DNA"/>
</dbReference>
<dbReference type="EMBL" id="BC047526">
    <property type="protein sequence ID" value="AAH47526.1"/>
    <property type="molecule type" value="mRNA"/>
</dbReference>
<dbReference type="CCDS" id="CCDS7408.1">
    <molecule id="P34969-1"/>
</dbReference>
<dbReference type="CCDS" id="CCDS7409.1">
    <molecule id="P34969-2"/>
</dbReference>
<dbReference type="CCDS" id="CCDS7410.1">
    <molecule id="P34969-3"/>
</dbReference>
<dbReference type="PIR" id="A48881">
    <property type="entry name" value="A48881"/>
</dbReference>
<dbReference type="RefSeq" id="NP_000863.1">
    <molecule id="P34969-2"/>
    <property type="nucleotide sequence ID" value="NM_000872.5"/>
</dbReference>
<dbReference type="RefSeq" id="NP_062873.1">
    <molecule id="P34969-1"/>
    <property type="nucleotide sequence ID" value="NM_019859.4"/>
</dbReference>
<dbReference type="RefSeq" id="NP_062874.1">
    <molecule id="P34969-3"/>
    <property type="nucleotide sequence ID" value="NM_019860.4"/>
</dbReference>
<dbReference type="PDB" id="7XTC">
    <property type="method" value="EM"/>
    <property type="resolution" value="3.20 A"/>
    <property type="chains" value="R=2-432"/>
</dbReference>
<dbReference type="PDBsum" id="7XTC"/>
<dbReference type="EMDB" id="EMD-33446"/>
<dbReference type="SMR" id="P34969"/>
<dbReference type="BioGRID" id="109595">
    <property type="interactions" value="6"/>
</dbReference>
<dbReference type="CORUM" id="P34969"/>
<dbReference type="FunCoup" id="P34969">
    <property type="interactions" value="1163"/>
</dbReference>
<dbReference type="IntAct" id="P34969">
    <property type="interactions" value="76"/>
</dbReference>
<dbReference type="STRING" id="9606.ENSP00000337949"/>
<dbReference type="BindingDB" id="P34969"/>
<dbReference type="ChEMBL" id="CHEMBL3155"/>
<dbReference type="DrugBank" id="DB06288">
    <property type="generic name" value="Amisulpride"/>
</dbReference>
<dbReference type="DrugBank" id="DB00321">
    <property type="generic name" value="Amitriptyline"/>
</dbReference>
<dbReference type="DrugBank" id="DB00543">
    <property type="generic name" value="Amoxapine"/>
</dbReference>
<dbReference type="DrugBank" id="DB01238">
    <property type="generic name" value="Aripiprazole"/>
</dbReference>
<dbReference type="DrugBank" id="DB14185">
    <property type="generic name" value="Aripiprazole lauroxil"/>
</dbReference>
<dbReference type="DrugBank" id="DB06216">
    <property type="generic name" value="Asenapine"/>
</dbReference>
<dbReference type="DrugBank" id="DB09128">
    <property type="generic name" value="Brexpiprazole"/>
</dbReference>
<dbReference type="DrugBank" id="DB01200">
    <property type="generic name" value="Bromocriptine"/>
</dbReference>
<dbReference type="DrugBank" id="DB01445">
    <property type="generic name" value="Bufotenine"/>
</dbReference>
<dbReference type="DrugBank" id="DB00248">
    <property type="generic name" value="Cabergoline"/>
</dbReference>
<dbReference type="DrugBank" id="DB00477">
    <property type="generic name" value="Chlorpromazine"/>
</dbReference>
<dbReference type="DrugBank" id="DB01239">
    <property type="generic name" value="Chlorprothixene"/>
</dbReference>
<dbReference type="DrugBank" id="DB00363">
    <property type="generic name" value="Clozapine"/>
</dbReference>
<dbReference type="DrugBank" id="DB09000">
    <property type="generic name" value="Cyamemazine"/>
</dbReference>
<dbReference type="DrugBank" id="DB00924">
    <property type="generic name" value="Cyclobenzaprine"/>
</dbReference>
<dbReference type="DrugBank" id="DB00434">
    <property type="generic name" value="Cyproheptadine"/>
</dbReference>
<dbReference type="DrugBank" id="DB11274">
    <property type="generic name" value="Dihydro-alpha-ergocryptine"/>
</dbReference>
<dbReference type="DrugBank" id="DB11273">
    <property type="generic name" value="Dihydroergocornine"/>
</dbReference>
<dbReference type="DrugBank" id="DB13345">
    <property type="generic name" value="Dihydroergocristine"/>
</dbReference>
<dbReference type="DrugBank" id="DB00988">
    <property type="generic name" value="Dopamine"/>
</dbReference>
<dbReference type="DrugBank" id="DB00751">
    <property type="generic name" value="Epinastine"/>
</dbReference>
<dbReference type="DrugBank" id="DB01049">
    <property type="generic name" value="Ergoloid mesylate"/>
</dbReference>
<dbReference type="DrugBank" id="DB12141">
    <property type="generic name" value="Gilteritinib"/>
</dbReference>
<dbReference type="DrugBank" id="DB00502">
    <property type="generic name" value="Haloperidol"/>
</dbReference>
<dbReference type="DrugBank" id="DB04946">
    <property type="generic name" value="Iloperidone"/>
</dbReference>
<dbReference type="DrugBank" id="DB00458">
    <property type="generic name" value="Imipramine"/>
</dbReference>
<dbReference type="DrugBank" id="DB00589">
    <property type="generic name" value="Lisuride"/>
</dbReference>
<dbReference type="DrugBank" id="DB04948">
    <property type="generic name" value="Lofexidine"/>
</dbReference>
<dbReference type="DrugBank" id="DB00408">
    <property type="generic name" value="Loxapine"/>
</dbReference>
<dbReference type="DrugBank" id="DB08815">
    <property type="generic name" value="Lurasidone"/>
</dbReference>
<dbReference type="DrugBank" id="DB12110">
    <property type="generic name" value="m-Chlorophenylpiperazine"/>
</dbReference>
<dbReference type="DrugBank" id="DB00934">
    <property type="generic name" value="Maprotiline"/>
</dbReference>
<dbReference type="DrugBank" id="DB00247">
    <property type="generic name" value="Methysergide"/>
</dbReference>
<dbReference type="DrugBank" id="DB06148">
    <property type="generic name" value="Mianserin"/>
</dbReference>
<dbReference type="DrugBank" id="DB01267">
    <property type="generic name" value="Paliperidone"/>
</dbReference>
<dbReference type="DrugBank" id="DB00715">
    <property type="generic name" value="Paroxetine"/>
</dbReference>
<dbReference type="DrugBank" id="DB01224">
    <property type="generic name" value="Quetiapine"/>
</dbReference>
<dbReference type="DrugBank" id="DB00734">
    <property type="generic name" value="Risperidone"/>
</dbReference>
<dbReference type="DrugBank" id="DB00953">
    <property type="generic name" value="Rizatriptan"/>
</dbReference>
<dbReference type="DrugBank" id="DB13988">
    <property type="generic name" value="SB-269970"/>
</dbReference>
<dbReference type="DrugBank" id="DB08839">
    <property type="generic name" value="Serotonin"/>
</dbReference>
<dbReference type="DrugBank" id="DB09304">
    <property type="generic name" value="Setiptiline"/>
</dbReference>
<dbReference type="DrugBank" id="DB17056">
    <property type="generic name" value="Spiperone"/>
</dbReference>
<dbReference type="DrugBank" id="DB13025">
    <property type="generic name" value="Tiapride"/>
</dbReference>
<dbReference type="DrugBank" id="DB09068">
    <property type="generic name" value="Vortioxetine"/>
</dbReference>
<dbReference type="DrugBank" id="DB00246">
    <property type="generic name" value="Ziprasidone"/>
</dbReference>
<dbReference type="DrugBank" id="DB00315">
    <property type="generic name" value="Zolmitriptan"/>
</dbReference>
<dbReference type="DrugBank" id="DB09225">
    <property type="generic name" value="Zotepine"/>
</dbReference>
<dbReference type="DrugCentral" id="P34969"/>
<dbReference type="GuidetoPHARMACOLOGY" id="12"/>
<dbReference type="GlyCosmos" id="P34969">
    <property type="glycosylation" value="2 sites, No reported glycans"/>
</dbReference>
<dbReference type="GlyGen" id="P34969">
    <property type="glycosylation" value="2 sites"/>
</dbReference>
<dbReference type="iPTMnet" id="P34969"/>
<dbReference type="PhosphoSitePlus" id="P34969"/>
<dbReference type="BioMuta" id="HTR7"/>
<dbReference type="DMDM" id="8488960"/>
<dbReference type="MassIVE" id="P34969"/>
<dbReference type="PaxDb" id="9606-ENSP00000337949"/>
<dbReference type="PeptideAtlas" id="P34969"/>
<dbReference type="ProteomicsDB" id="54961">
    <molecule id="P34969-1"/>
</dbReference>
<dbReference type="ProteomicsDB" id="54962">
    <molecule id="P34969-2"/>
</dbReference>
<dbReference type="ProteomicsDB" id="54963">
    <molecule id="P34969-3"/>
</dbReference>
<dbReference type="Antibodypedia" id="16324">
    <property type="antibodies" value="431 antibodies from 35 providers"/>
</dbReference>
<dbReference type="DNASU" id="3363"/>
<dbReference type="Ensembl" id="ENST00000277874.10">
    <molecule id="P34969-2"/>
    <property type="protein sequence ID" value="ENSP00000277874.6"/>
    <property type="gene ID" value="ENSG00000148680.16"/>
</dbReference>
<dbReference type="Ensembl" id="ENST00000336152.8">
    <molecule id="P34969-1"/>
    <property type="protein sequence ID" value="ENSP00000337949.3"/>
    <property type="gene ID" value="ENSG00000148680.16"/>
</dbReference>
<dbReference type="Ensembl" id="ENST00000371719.2">
    <molecule id="P34969-3"/>
    <property type="protein sequence ID" value="ENSP00000360784.2"/>
    <property type="gene ID" value="ENSG00000148680.16"/>
</dbReference>
<dbReference type="GeneID" id="3363"/>
<dbReference type="KEGG" id="hsa:3363"/>
<dbReference type="MANE-Select" id="ENST00000336152.8">
    <property type="protein sequence ID" value="ENSP00000337949.3"/>
    <property type="RefSeq nucleotide sequence ID" value="NM_019859.4"/>
    <property type="RefSeq protein sequence ID" value="NP_062873.1"/>
</dbReference>
<dbReference type="UCSC" id="uc001kgz.4">
    <molecule id="P34969-1"/>
    <property type="organism name" value="human"/>
</dbReference>
<dbReference type="AGR" id="HGNC:5302"/>
<dbReference type="CTD" id="3363"/>
<dbReference type="DisGeNET" id="3363"/>
<dbReference type="GeneCards" id="HTR7"/>
<dbReference type="HGNC" id="HGNC:5302">
    <property type="gene designation" value="HTR7"/>
</dbReference>
<dbReference type="HPA" id="ENSG00000148680">
    <property type="expression patterns" value="Group enriched (parathyroid gland, testis)"/>
</dbReference>
<dbReference type="MIM" id="182137">
    <property type="type" value="gene"/>
</dbReference>
<dbReference type="neXtProt" id="NX_P34969"/>
<dbReference type="OpenTargets" id="ENSG00000148680"/>
<dbReference type="PharmGKB" id="PA29561"/>
<dbReference type="VEuPathDB" id="HostDB:ENSG00000148680"/>
<dbReference type="eggNOG" id="KOG3656">
    <property type="taxonomic scope" value="Eukaryota"/>
</dbReference>
<dbReference type="GeneTree" id="ENSGT01010000222287"/>
<dbReference type="HOGENOM" id="CLU_009579_11_6_1"/>
<dbReference type="InParanoid" id="P34969"/>
<dbReference type="OMA" id="PRVSVWV"/>
<dbReference type="OrthoDB" id="10063595at2759"/>
<dbReference type="PAN-GO" id="P34969">
    <property type="GO annotations" value="6 GO annotations based on evolutionary models"/>
</dbReference>
<dbReference type="PhylomeDB" id="P34969"/>
<dbReference type="TreeFam" id="TF331895"/>
<dbReference type="PathwayCommons" id="P34969"/>
<dbReference type="Reactome" id="R-HSA-390666">
    <property type="pathway name" value="Serotonin receptors"/>
</dbReference>
<dbReference type="Reactome" id="R-HSA-418555">
    <property type="pathway name" value="G alpha (s) signalling events"/>
</dbReference>
<dbReference type="Reactome" id="R-HSA-9706019">
    <molecule id="P34969-2"/>
    <property type="pathway name" value="RHOBTB3 ATPase cycle"/>
</dbReference>
<dbReference type="SignaLink" id="P34969"/>
<dbReference type="SIGNOR" id="P34969"/>
<dbReference type="BioGRID-ORCS" id="3363">
    <property type="hits" value="13 hits in 1152 CRISPR screens"/>
</dbReference>
<dbReference type="GeneWiki" id="5-HT7_receptor"/>
<dbReference type="GenomeRNAi" id="3363"/>
<dbReference type="Pharos" id="P34969">
    <property type="development level" value="Tclin"/>
</dbReference>
<dbReference type="PRO" id="PR:P34969"/>
<dbReference type="Proteomes" id="UP000005640">
    <property type="component" value="Chromosome 10"/>
</dbReference>
<dbReference type="RNAct" id="P34969">
    <property type="molecule type" value="protein"/>
</dbReference>
<dbReference type="Bgee" id="ENSG00000148680">
    <property type="expression patterns" value="Expressed in primordial germ cell in gonad and 137 other cell types or tissues"/>
</dbReference>
<dbReference type="GO" id="GO:0005929">
    <property type="term" value="C:cilium"/>
    <property type="evidence" value="ECO:0000314"/>
    <property type="project" value="HPA"/>
</dbReference>
<dbReference type="GO" id="GO:0030425">
    <property type="term" value="C:dendrite"/>
    <property type="evidence" value="ECO:0000318"/>
    <property type="project" value="GO_Central"/>
</dbReference>
<dbReference type="GO" id="GO:0005654">
    <property type="term" value="C:nucleoplasm"/>
    <property type="evidence" value="ECO:0000314"/>
    <property type="project" value="HPA"/>
</dbReference>
<dbReference type="GO" id="GO:0005886">
    <property type="term" value="C:plasma membrane"/>
    <property type="evidence" value="ECO:0000314"/>
    <property type="project" value="HPA"/>
</dbReference>
<dbReference type="GO" id="GO:0045202">
    <property type="term" value="C:synapse"/>
    <property type="evidence" value="ECO:0007669"/>
    <property type="project" value="GOC"/>
</dbReference>
<dbReference type="GO" id="GO:0032588">
    <property type="term" value="C:trans-Golgi network membrane"/>
    <property type="evidence" value="ECO:0000304"/>
    <property type="project" value="Reactome"/>
</dbReference>
<dbReference type="GO" id="GO:0004993">
    <property type="term" value="F:G protein-coupled serotonin receptor activity"/>
    <property type="evidence" value="ECO:0000314"/>
    <property type="project" value="UniProtKB"/>
</dbReference>
<dbReference type="GO" id="GO:0030594">
    <property type="term" value="F:neurotransmitter receptor activity"/>
    <property type="evidence" value="ECO:0000318"/>
    <property type="project" value="GO_Central"/>
</dbReference>
<dbReference type="GO" id="GO:0099589">
    <property type="term" value="F:serotonin receptor activity"/>
    <property type="evidence" value="ECO:0000314"/>
    <property type="project" value="UniProt"/>
</dbReference>
<dbReference type="GO" id="GO:0007192">
    <property type="term" value="P:adenylate cyclase-activating serotonin receptor signaling pathway"/>
    <property type="evidence" value="ECO:0000314"/>
    <property type="project" value="UniProtKB"/>
</dbReference>
<dbReference type="GO" id="GO:0008015">
    <property type="term" value="P:blood circulation"/>
    <property type="evidence" value="ECO:0000304"/>
    <property type="project" value="ProtInc"/>
</dbReference>
<dbReference type="GO" id="GO:0007268">
    <property type="term" value="P:chemical synaptic transmission"/>
    <property type="evidence" value="ECO:0000318"/>
    <property type="project" value="GO_Central"/>
</dbReference>
<dbReference type="GO" id="GO:0007623">
    <property type="term" value="P:circadian rhythm"/>
    <property type="evidence" value="ECO:0000304"/>
    <property type="project" value="ProtInc"/>
</dbReference>
<dbReference type="GO" id="GO:0007187">
    <property type="term" value="P:G protein-coupled receptor signaling pathway, coupled to cyclic nucleotide second messenger"/>
    <property type="evidence" value="ECO:0000318"/>
    <property type="project" value="GO_Central"/>
</dbReference>
<dbReference type="GO" id="GO:0006939">
    <property type="term" value="P:smooth muscle contraction"/>
    <property type="evidence" value="ECO:0007669"/>
    <property type="project" value="InterPro"/>
</dbReference>
<dbReference type="GO" id="GO:0042310">
    <property type="term" value="P:vasoconstriction"/>
    <property type="evidence" value="ECO:0007669"/>
    <property type="project" value="InterPro"/>
</dbReference>
<dbReference type="CDD" id="cd15329">
    <property type="entry name" value="7tmA_5-HT7"/>
    <property type="match status" value="1"/>
</dbReference>
<dbReference type="FunFam" id="1.20.1070.10:FF:000071">
    <property type="entry name" value="5-hydroxytryptamine (serotonin) receptor 7a"/>
    <property type="match status" value="1"/>
</dbReference>
<dbReference type="Gene3D" id="1.20.1070.10">
    <property type="entry name" value="Rhodopsin 7-helix transmembrane proteins"/>
    <property type="match status" value="1"/>
</dbReference>
<dbReference type="InterPro" id="IPR001069">
    <property type="entry name" value="5HT_7_rcpt"/>
</dbReference>
<dbReference type="InterPro" id="IPR000276">
    <property type="entry name" value="GPCR_Rhodpsn"/>
</dbReference>
<dbReference type="InterPro" id="IPR017452">
    <property type="entry name" value="GPCR_Rhodpsn_7TM"/>
</dbReference>
<dbReference type="PANTHER" id="PTHR24248">
    <property type="entry name" value="ADRENERGIC RECEPTOR-RELATED G-PROTEIN COUPLED RECEPTOR"/>
    <property type="match status" value="1"/>
</dbReference>
<dbReference type="PANTHER" id="PTHR24248:SF199">
    <property type="entry name" value="IP13425P-RELATED"/>
    <property type="match status" value="1"/>
</dbReference>
<dbReference type="Pfam" id="PF00001">
    <property type="entry name" value="7tm_1"/>
    <property type="match status" value="1"/>
</dbReference>
<dbReference type="PRINTS" id="PR00652">
    <property type="entry name" value="5HT7RECEPTR"/>
</dbReference>
<dbReference type="PRINTS" id="PR00237">
    <property type="entry name" value="GPCRRHODOPSN"/>
</dbReference>
<dbReference type="SUPFAM" id="SSF81321">
    <property type="entry name" value="Family A G protein-coupled receptor-like"/>
    <property type="match status" value="1"/>
</dbReference>
<dbReference type="PROSITE" id="PS00237">
    <property type="entry name" value="G_PROTEIN_RECEP_F1_1"/>
    <property type="match status" value="1"/>
</dbReference>
<dbReference type="PROSITE" id="PS50262">
    <property type="entry name" value="G_PROTEIN_RECEP_F1_2"/>
    <property type="match status" value="1"/>
</dbReference>
<comment type="function">
    <text evidence="5 6">G-protein coupled receptor for 5-hydroxytryptamine (serotonin), a biogenic hormone that functions as a neurotransmitter, a hormone and a mitogen (PubMed:35714614, PubMed:8226867). Ligand binding causes a conformation change that triggers signaling via guanine nucleotide-binding proteins (G proteins) and modulates the activity of downstream effectors (PubMed:35714614, PubMed:8226867). HTR7 is coupled to G(s) G alpha proteins and mediates activation of adenylate cyclase activity (PubMed:35714614).</text>
</comment>
<comment type="interaction">
    <interactant intactId="EBI-2625020">
        <id>P34969</id>
    </interactant>
    <interactant intactId="EBI-352602">
        <id>P43243</id>
        <label>MATR3</label>
    </interactant>
    <organismsDiffer>false</organismsDiffer>
    <experiments>2</experiments>
</comment>
<comment type="subcellular location">
    <subcellularLocation>
        <location evidence="4">Cell membrane</location>
        <topology evidence="5">Multi-pass membrane protein</topology>
    </subcellularLocation>
</comment>
<comment type="alternative products">
    <event type="alternative splicing"/>
    <isoform>
        <id>P34969-1</id>
        <name>D</name>
        <sequence type="displayed"/>
    </isoform>
    <isoform>
        <id>P34969-2</id>
        <name>A</name>
        <sequence type="described" ref="VSP_001857"/>
    </isoform>
    <isoform>
        <id>P34969-3</id>
        <name>B</name>
        <sequence type="described" ref="VSP_001856"/>
    </isoform>
    <text>Isoform A and isoform B appear to be expressed at higher levels.</text>
</comment>
<comment type="tissue specificity">
    <molecule>Isoform A</molecule>
    <text evidence="7">Predominant isoform in spleen, caudate and hippocampus.</text>
</comment>
<comment type="tissue specificity">
    <molecule>Isoform B</molecule>
    <text evidence="7">Expressed at lower levels.</text>
</comment>
<comment type="tissue specificity">
    <molecule>Isoform D</molecule>
    <text evidence="7">Minor isoform in terms of expression.</text>
</comment>
<comment type="domain">
    <text evidence="1">Specificity for G(s) G alpha proteins is determined by the length of transmembrane regions 5 and 6 (TM5 and TM6).</text>
</comment>
<comment type="similarity">
    <text evidence="3">Belongs to the G-protein coupled receptor 1 family.</text>
</comment>
<accession>P34969</accession>
<accession>B5BUP6</accession>
<accession>P78336</accession>
<accession>P78372</accession>
<accession>P78516</accession>
<accession>Q5VX01</accession>
<accession>Q5VX02</accession>
<accession>Q5VX03</accession>